<dbReference type="EC" id="1.3.1.89" evidence="1"/>
<dbReference type="EC" id="1.3.1.-" evidence="3"/>
<dbReference type="EMBL" id="CP000498">
    <property type="protein sequence ID" value="ABN66252.1"/>
    <property type="molecule type" value="Genomic_DNA"/>
</dbReference>
<dbReference type="RefSeq" id="XP_001384281.1">
    <property type="nucleotide sequence ID" value="XM_001384244.1"/>
</dbReference>
<dbReference type="SMR" id="A3LUK5"/>
<dbReference type="FunCoup" id="A3LUK5">
    <property type="interactions" value="931"/>
</dbReference>
<dbReference type="STRING" id="322104.A3LUK5"/>
<dbReference type="GeneID" id="4838835"/>
<dbReference type="KEGG" id="pic:PICST_83606"/>
<dbReference type="eggNOG" id="KOG2333">
    <property type="taxonomic scope" value="Eukaryota"/>
</dbReference>
<dbReference type="HOGENOM" id="CLU_013299_7_3_1"/>
<dbReference type="InParanoid" id="A3LUK5"/>
<dbReference type="OMA" id="WSYIAEC"/>
<dbReference type="OrthoDB" id="259935at2759"/>
<dbReference type="Proteomes" id="UP000002258">
    <property type="component" value="Chromosome 4"/>
</dbReference>
<dbReference type="GO" id="GO:0005737">
    <property type="term" value="C:cytoplasm"/>
    <property type="evidence" value="ECO:0007669"/>
    <property type="project" value="UniProtKB-SubCell"/>
</dbReference>
<dbReference type="GO" id="GO:0034399">
    <property type="term" value="C:nuclear periphery"/>
    <property type="evidence" value="ECO:0007669"/>
    <property type="project" value="EnsemblFungi"/>
</dbReference>
<dbReference type="GO" id="GO:0050660">
    <property type="term" value="F:flavin adenine dinucleotide binding"/>
    <property type="evidence" value="ECO:0007669"/>
    <property type="project" value="InterPro"/>
</dbReference>
<dbReference type="GO" id="GO:0106414">
    <property type="term" value="F:mRNA dihydrouridine synthase activity"/>
    <property type="evidence" value="ECO:0007669"/>
    <property type="project" value="RHEA"/>
</dbReference>
<dbReference type="GO" id="GO:0003723">
    <property type="term" value="F:RNA binding"/>
    <property type="evidence" value="ECO:0007669"/>
    <property type="project" value="TreeGrafter"/>
</dbReference>
<dbReference type="GO" id="GO:0102265">
    <property type="term" value="F:tRNA-dihydrouridine47 synthase activity"/>
    <property type="evidence" value="ECO:0007669"/>
    <property type="project" value="UniProtKB-EC"/>
</dbReference>
<dbReference type="GO" id="GO:0008270">
    <property type="term" value="F:zinc ion binding"/>
    <property type="evidence" value="ECO:0007669"/>
    <property type="project" value="UniProtKB-KW"/>
</dbReference>
<dbReference type="GO" id="GO:0006397">
    <property type="term" value="P:mRNA processing"/>
    <property type="evidence" value="ECO:0007669"/>
    <property type="project" value="UniProtKB-KW"/>
</dbReference>
<dbReference type="CDD" id="cd02801">
    <property type="entry name" value="DUS_like_FMN"/>
    <property type="match status" value="1"/>
</dbReference>
<dbReference type="FunFam" id="3.20.20.70:FF:000145">
    <property type="entry name" value="tRNA-dihydrouridine(47) synthase [NAD(P)(+)]"/>
    <property type="match status" value="1"/>
</dbReference>
<dbReference type="Gene3D" id="3.20.20.70">
    <property type="entry name" value="Aldolase class I"/>
    <property type="match status" value="1"/>
</dbReference>
<dbReference type="InterPro" id="IPR013785">
    <property type="entry name" value="Aldolase_TIM"/>
</dbReference>
<dbReference type="InterPro" id="IPR035587">
    <property type="entry name" value="DUS-like_FMN-bd"/>
</dbReference>
<dbReference type="InterPro" id="IPR018517">
    <property type="entry name" value="tRNA_hU_synthase_CS"/>
</dbReference>
<dbReference type="PANTHER" id="PTHR45846">
    <property type="entry name" value="TRNA-DIHYDROURIDINE(47) SYNTHASE [NAD(P)(+)]-LIKE"/>
    <property type="match status" value="1"/>
</dbReference>
<dbReference type="PANTHER" id="PTHR45846:SF1">
    <property type="entry name" value="TRNA-DIHYDROURIDINE(47) SYNTHASE [NAD(P)(+)]-LIKE"/>
    <property type="match status" value="1"/>
</dbReference>
<dbReference type="Pfam" id="PF01207">
    <property type="entry name" value="Dus"/>
    <property type="match status" value="1"/>
</dbReference>
<dbReference type="SUPFAM" id="SSF51395">
    <property type="entry name" value="FMN-linked oxidoreductases"/>
    <property type="match status" value="1"/>
</dbReference>
<dbReference type="PROSITE" id="PS01136">
    <property type="entry name" value="UPF0034"/>
    <property type="match status" value="1"/>
</dbReference>
<comment type="function">
    <text evidence="1 3">Catalyzes the synthesis of dihydrouridine, a modified base found in the D-loop of most tRNAs. Specifically modifies U47 in cytoplasmic tRNAs (By similarity). Catalyzes the synthesis of dihydrouridine in some mRNAs, thereby affecting their translation (By similarity).</text>
</comment>
<comment type="catalytic activity">
    <reaction evidence="1">
        <text>5,6-dihydrouridine(47) in tRNA + NAD(+) = uridine(47) in tRNA + NADH + H(+)</text>
        <dbReference type="Rhea" id="RHEA:53364"/>
        <dbReference type="Rhea" id="RHEA-COMP:13539"/>
        <dbReference type="Rhea" id="RHEA-COMP:13540"/>
        <dbReference type="ChEBI" id="CHEBI:15378"/>
        <dbReference type="ChEBI" id="CHEBI:57540"/>
        <dbReference type="ChEBI" id="CHEBI:57945"/>
        <dbReference type="ChEBI" id="CHEBI:65315"/>
        <dbReference type="ChEBI" id="CHEBI:74443"/>
        <dbReference type="EC" id="1.3.1.89"/>
    </reaction>
    <physiologicalReaction direction="right-to-left" evidence="1">
        <dbReference type="Rhea" id="RHEA:53366"/>
    </physiologicalReaction>
</comment>
<comment type="catalytic activity">
    <reaction evidence="1">
        <text>5,6-dihydrouridine(47) in tRNA + NADP(+) = uridine(47) in tRNA + NADPH + H(+)</text>
        <dbReference type="Rhea" id="RHEA:53360"/>
        <dbReference type="Rhea" id="RHEA-COMP:13539"/>
        <dbReference type="Rhea" id="RHEA-COMP:13540"/>
        <dbReference type="ChEBI" id="CHEBI:15378"/>
        <dbReference type="ChEBI" id="CHEBI:57783"/>
        <dbReference type="ChEBI" id="CHEBI:58349"/>
        <dbReference type="ChEBI" id="CHEBI:65315"/>
        <dbReference type="ChEBI" id="CHEBI:74443"/>
        <dbReference type="EC" id="1.3.1.89"/>
    </reaction>
    <physiologicalReaction direction="right-to-left" evidence="1">
        <dbReference type="Rhea" id="RHEA:53362"/>
    </physiologicalReaction>
</comment>
<comment type="catalytic activity">
    <reaction evidence="3">
        <text>a 5,6-dihydrouridine in mRNA + NAD(+) = a uridine in mRNA + NADH + H(+)</text>
        <dbReference type="Rhea" id="RHEA:69851"/>
        <dbReference type="Rhea" id="RHEA-COMP:14658"/>
        <dbReference type="Rhea" id="RHEA-COMP:17789"/>
        <dbReference type="ChEBI" id="CHEBI:15378"/>
        <dbReference type="ChEBI" id="CHEBI:57540"/>
        <dbReference type="ChEBI" id="CHEBI:57945"/>
        <dbReference type="ChEBI" id="CHEBI:65315"/>
        <dbReference type="ChEBI" id="CHEBI:74443"/>
    </reaction>
    <physiologicalReaction direction="right-to-left" evidence="3">
        <dbReference type="Rhea" id="RHEA:69853"/>
    </physiologicalReaction>
</comment>
<comment type="catalytic activity">
    <reaction evidence="3">
        <text>a 5,6-dihydrouridine in mRNA + NADP(+) = a uridine in mRNA + NADPH + H(+)</text>
        <dbReference type="Rhea" id="RHEA:69855"/>
        <dbReference type="Rhea" id="RHEA-COMP:14658"/>
        <dbReference type="Rhea" id="RHEA-COMP:17789"/>
        <dbReference type="ChEBI" id="CHEBI:15378"/>
        <dbReference type="ChEBI" id="CHEBI:57783"/>
        <dbReference type="ChEBI" id="CHEBI:58349"/>
        <dbReference type="ChEBI" id="CHEBI:65315"/>
        <dbReference type="ChEBI" id="CHEBI:74443"/>
    </reaction>
    <physiologicalReaction direction="right-to-left" evidence="3">
        <dbReference type="Rhea" id="RHEA:69857"/>
    </physiologicalReaction>
</comment>
<comment type="cofactor">
    <cofactor evidence="2">
        <name>FMN</name>
        <dbReference type="ChEBI" id="CHEBI:58210"/>
    </cofactor>
</comment>
<comment type="subcellular location">
    <subcellularLocation>
        <location evidence="1">Cytoplasm</location>
    </subcellularLocation>
    <subcellularLocation>
        <location evidence="1">Nucleus</location>
    </subcellularLocation>
</comment>
<comment type="similarity">
    <text evidence="5">Belongs to the Dus family. Dus3 subfamily.</text>
</comment>
<keyword id="KW-0963">Cytoplasm</keyword>
<keyword id="KW-0285">Flavoprotein</keyword>
<keyword id="KW-0288">FMN</keyword>
<keyword id="KW-0479">Metal-binding</keyword>
<keyword id="KW-0507">mRNA processing</keyword>
<keyword id="KW-0520">NAD</keyword>
<keyword id="KW-0521">NADP</keyword>
<keyword id="KW-0539">Nucleus</keyword>
<keyword id="KW-0560">Oxidoreductase</keyword>
<keyword id="KW-1185">Reference proteome</keyword>
<keyword id="KW-0677">Repeat</keyword>
<keyword id="KW-0819">tRNA processing</keyword>
<keyword id="KW-0862">Zinc</keyword>
<keyword id="KW-0863">Zinc-finger</keyword>
<evidence type="ECO:0000250" key="1">
    <source>
        <dbReference type="UniProtKB" id="Q06053"/>
    </source>
</evidence>
<evidence type="ECO:0000250" key="2">
    <source>
        <dbReference type="UniProtKB" id="Q5SMC7"/>
    </source>
</evidence>
<evidence type="ECO:0000250" key="3">
    <source>
        <dbReference type="UniProtKB" id="Q9UTH9"/>
    </source>
</evidence>
<evidence type="ECO:0000256" key="4">
    <source>
        <dbReference type="SAM" id="MobiDB-lite"/>
    </source>
</evidence>
<evidence type="ECO:0000305" key="5"/>
<name>DUS3_PICST</name>
<gene>
    <name type="primary">DUS3</name>
    <name type="ORF">PICST_83606</name>
</gene>
<proteinExistence type="inferred from homology"/>
<accession>A3LUK5</accession>
<feature type="chain" id="PRO_0000330247" description="tRNA-dihydrouridine(47) synthase [NAD(P)(+)]">
    <location>
        <begin position="1"/>
        <end position="613"/>
    </location>
</feature>
<feature type="zinc finger region" description="C3H1-type 1">
    <location>
        <begin position="88"/>
        <end position="111"/>
    </location>
</feature>
<feature type="zinc finger region" description="C3H1-type 2">
    <location>
        <begin position="128"/>
        <end position="149"/>
    </location>
</feature>
<feature type="region of interest" description="Disordered" evidence="4">
    <location>
        <begin position="1"/>
        <end position="24"/>
    </location>
</feature>
<feature type="region of interest" description="Disordered" evidence="4">
    <location>
        <begin position="40"/>
        <end position="78"/>
    </location>
</feature>
<feature type="compositionally biased region" description="Basic and acidic residues" evidence="4">
    <location>
        <begin position="51"/>
        <end position="61"/>
    </location>
</feature>
<feature type="compositionally biased region" description="Basic residues" evidence="4">
    <location>
        <begin position="63"/>
        <end position="73"/>
    </location>
</feature>
<feature type="active site" description="Proton donor" evidence="2">
    <location>
        <position position="337"/>
    </location>
</feature>
<feature type="binding site" evidence="2">
    <location>
        <begin position="250"/>
        <end position="252"/>
    </location>
    <ligand>
        <name>FMN</name>
        <dbReference type="ChEBI" id="CHEBI:58210"/>
    </ligand>
</feature>
<feature type="binding site" evidence="2">
    <location>
        <position position="305"/>
    </location>
    <ligand>
        <name>FMN</name>
        <dbReference type="ChEBI" id="CHEBI:58210"/>
    </ligand>
</feature>
<feature type="binding site" evidence="2">
    <location>
        <position position="377"/>
    </location>
    <ligand>
        <name>FMN</name>
        <dbReference type="ChEBI" id="CHEBI:58210"/>
    </ligand>
</feature>
<feature type="binding site" evidence="2">
    <location>
        <position position="408"/>
    </location>
    <ligand>
        <name>FMN</name>
        <dbReference type="ChEBI" id="CHEBI:58210"/>
    </ligand>
</feature>
<feature type="binding site" evidence="2">
    <location>
        <begin position="456"/>
        <end position="458"/>
    </location>
    <ligand>
        <name>FMN</name>
        <dbReference type="ChEBI" id="CHEBI:58210"/>
    </ligand>
</feature>
<feature type="binding site" evidence="2">
    <location>
        <begin position="480"/>
        <end position="481"/>
    </location>
    <ligand>
        <name>FMN</name>
        <dbReference type="ChEBI" id="CHEBI:58210"/>
    </ligand>
</feature>
<sequence>MTAGEKRTSEALDQPESKKVHVERGMAAIKPEFIVQKDRIVDSFDDDEAEGGERGVEEGKSGKGGKKKRRGQNKNRDLKQKREEIRLCTSLLDPDNIKTCAYGPEQCRSTHNVEEYLASKPVDIEGICPVFRAIGYCPAGLKCRWLQSHYDKETRKLIKDLGRTEASKIELNYEVNNVSHEARGKLRKKQYDFAIAGKVIEYIDSTVQNDENIANAKEQRKNNEATYVDAPYKIAEKKRLDFRNAKIVSPLTTVGNLPYRRLMKKLGADITYSEMALSVPLLQATNAEWALPKAHRTEYPGYGVQIATSKHWAAAKVAEIISRETEHVSELNLNCGCPIDLLYRQGQGSALLEQPARLVRILKAMNASSGDIPVTVKIRTGSKENKNTAKTLVERLLAENDVAAITLHGRSRQQRYTKEADWNYIAEVGQVVQQWNDKKEENKDSRDTQRTCFVGNGDVFSHVDWYNAVNTDGIDSVMVARGALIKPWIFEEVEAQQYLDKTATERLDILKTFSDYALEHWGTDEYGVGLARRFMCEFLSFTHRYIPLGILERLPPKINERPPQWKGRNEMETLLGSTDYKDWIKITEMFLGKSGDDFVFTPKHKSNSYEKSN</sequence>
<protein>
    <recommendedName>
        <fullName>tRNA-dihydrouridine(47) synthase [NAD(P)(+)]</fullName>
        <ecNumber evidence="1">1.3.1.89</ecNumber>
    </recommendedName>
    <alternativeName>
        <fullName>mRNA-dihydrouridine synthase DUS3</fullName>
        <ecNumber evidence="3">1.3.1.-</ecNumber>
    </alternativeName>
    <alternativeName>
        <fullName>tRNA-dihydrouridine synthase 3</fullName>
    </alternativeName>
</protein>
<organism>
    <name type="scientific">Scheffersomyces stipitis (strain ATCC 58785 / CBS 6054 / NBRC 10063 / NRRL Y-11545)</name>
    <name type="common">Yeast</name>
    <name type="synonym">Pichia stipitis</name>
    <dbReference type="NCBI Taxonomy" id="322104"/>
    <lineage>
        <taxon>Eukaryota</taxon>
        <taxon>Fungi</taxon>
        <taxon>Dikarya</taxon>
        <taxon>Ascomycota</taxon>
        <taxon>Saccharomycotina</taxon>
        <taxon>Pichiomycetes</taxon>
        <taxon>Debaryomycetaceae</taxon>
        <taxon>Scheffersomyces</taxon>
    </lineage>
</organism>
<reference key="1">
    <citation type="journal article" date="2007" name="Nat. Biotechnol.">
        <title>Genome sequence of the lignocellulose-bioconverting and xylose-fermenting yeast Pichia stipitis.</title>
        <authorList>
            <person name="Jeffries T.W."/>
            <person name="Grigoriev I.V."/>
            <person name="Grimwood J."/>
            <person name="Laplaza J.M."/>
            <person name="Aerts A."/>
            <person name="Salamov A."/>
            <person name="Schmutz J."/>
            <person name="Lindquist E."/>
            <person name="Dehal P."/>
            <person name="Shapiro H."/>
            <person name="Jin Y.-S."/>
            <person name="Passoth V."/>
            <person name="Richardson P.M."/>
        </authorList>
    </citation>
    <scope>NUCLEOTIDE SEQUENCE [LARGE SCALE GENOMIC DNA]</scope>
    <source>
        <strain>ATCC 58785 / CBS 6054 / NBRC 10063 / NRRL Y-11545</strain>
    </source>
</reference>